<evidence type="ECO:0000255" key="1">
    <source>
        <dbReference type="HAMAP-Rule" id="MF_01197"/>
    </source>
</evidence>
<evidence type="ECO:0000256" key="2">
    <source>
        <dbReference type="SAM" id="MobiDB-lite"/>
    </source>
</evidence>
<organism>
    <name type="scientific">Staphylococcus aureus (strain USA300 / TCH1516)</name>
    <dbReference type="NCBI Taxonomy" id="451516"/>
    <lineage>
        <taxon>Bacteria</taxon>
        <taxon>Bacillati</taxon>
        <taxon>Bacillota</taxon>
        <taxon>Bacilli</taxon>
        <taxon>Bacillales</taxon>
        <taxon>Staphylococcaceae</taxon>
        <taxon>Staphylococcus</taxon>
    </lineage>
</organism>
<reference key="1">
    <citation type="journal article" date="2007" name="BMC Microbiol.">
        <title>Subtle genetic changes enhance virulence of methicillin resistant and sensitive Staphylococcus aureus.</title>
        <authorList>
            <person name="Highlander S.K."/>
            <person name="Hulten K.G."/>
            <person name="Qin X."/>
            <person name="Jiang H."/>
            <person name="Yerrapragada S."/>
            <person name="Mason E.O. Jr."/>
            <person name="Shang Y."/>
            <person name="Williams T.M."/>
            <person name="Fortunov R.M."/>
            <person name="Liu Y."/>
            <person name="Igboeli O."/>
            <person name="Petrosino J."/>
            <person name="Tirumalai M."/>
            <person name="Uzman A."/>
            <person name="Fox G.E."/>
            <person name="Cardenas A.M."/>
            <person name="Muzny D.M."/>
            <person name="Hemphill L."/>
            <person name="Ding Y."/>
            <person name="Dugan S."/>
            <person name="Blyth P.R."/>
            <person name="Buhay C.J."/>
            <person name="Dinh H.H."/>
            <person name="Hawes A.C."/>
            <person name="Holder M."/>
            <person name="Kovar C.L."/>
            <person name="Lee S.L."/>
            <person name="Liu W."/>
            <person name="Nazareth L.V."/>
            <person name="Wang Q."/>
            <person name="Zhou J."/>
            <person name="Kaplan S.L."/>
            <person name="Weinstock G.M."/>
        </authorList>
    </citation>
    <scope>NUCLEOTIDE SEQUENCE [LARGE SCALE GENOMIC DNA]</scope>
    <source>
        <strain>USA300 / TCH1516</strain>
    </source>
</reference>
<name>SEPF_STAAT</name>
<proteinExistence type="inferred from homology"/>
<gene>
    <name evidence="1" type="primary">sepF</name>
    <name type="ordered locus">USA300HOU_1126</name>
</gene>
<dbReference type="EMBL" id="CP000730">
    <property type="protein sequence ID" value="ABX29143.1"/>
    <property type="molecule type" value="Genomic_DNA"/>
</dbReference>
<dbReference type="RefSeq" id="WP_000018608.1">
    <property type="nucleotide sequence ID" value="NC_010079.1"/>
</dbReference>
<dbReference type="SMR" id="A8Z3M7"/>
<dbReference type="KEGG" id="sax:USA300HOU_1126"/>
<dbReference type="HOGENOM" id="CLU_078499_4_1_9"/>
<dbReference type="GO" id="GO:0005737">
    <property type="term" value="C:cytoplasm"/>
    <property type="evidence" value="ECO:0007669"/>
    <property type="project" value="UniProtKB-SubCell"/>
</dbReference>
<dbReference type="GO" id="GO:0000917">
    <property type="term" value="P:division septum assembly"/>
    <property type="evidence" value="ECO:0007669"/>
    <property type="project" value="UniProtKB-KW"/>
</dbReference>
<dbReference type="GO" id="GO:0043093">
    <property type="term" value="P:FtsZ-dependent cytokinesis"/>
    <property type="evidence" value="ECO:0007669"/>
    <property type="project" value="UniProtKB-UniRule"/>
</dbReference>
<dbReference type="Gene3D" id="3.30.110.150">
    <property type="entry name" value="SepF-like protein"/>
    <property type="match status" value="1"/>
</dbReference>
<dbReference type="HAMAP" id="MF_01197">
    <property type="entry name" value="SepF"/>
    <property type="match status" value="1"/>
</dbReference>
<dbReference type="InterPro" id="IPR023052">
    <property type="entry name" value="Cell_div_SepF"/>
</dbReference>
<dbReference type="InterPro" id="IPR007561">
    <property type="entry name" value="Cell_div_SepF/SepF-rel"/>
</dbReference>
<dbReference type="InterPro" id="IPR038594">
    <property type="entry name" value="SepF-like_sf"/>
</dbReference>
<dbReference type="PANTHER" id="PTHR35798">
    <property type="entry name" value="CELL DIVISION PROTEIN SEPF"/>
    <property type="match status" value="1"/>
</dbReference>
<dbReference type="PANTHER" id="PTHR35798:SF1">
    <property type="entry name" value="CELL DIVISION PROTEIN SEPF"/>
    <property type="match status" value="1"/>
</dbReference>
<dbReference type="Pfam" id="PF04472">
    <property type="entry name" value="SepF"/>
    <property type="match status" value="1"/>
</dbReference>
<accession>A8Z3M7</accession>
<sequence length="187" mass="21023">MSHLALKDLFSGFFVIDDEEEVEVPDKQQQVNEAPAKEQSQQTTKQNAIKSVPQKSASRYTTTSEERNNRMSNYSKNNSRNVVTMNNATPNNASQESSKMCLFEPRVFSDTQDIADELKNRRATLVNLQRIDKVSAKRIIDFLSGTVYAIGGDIQRVGTDIFLCTPDNVEVAGSITDHIENMEHSFD</sequence>
<keyword id="KW-0131">Cell cycle</keyword>
<keyword id="KW-0132">Cell division</keyword>
<keyword id="KW-0963">Cytoplasm</keyword>
<keyword id="KW-0717">Septation</keyword>
<feature type="chain" id="PRO_0000334086" description="Cell division protein SepF">
    <location>
        <begin position="1"/>
        <end position="187"/>
    </location>
</feature>
<feature type="region of interest" description="Disordered" evidence="2">
    <location>
        <begin position="21"/>
        <end position="97"/>
    </location>
</feature>
<feature type="compositionally biased region" description="Polar residues" evidence="2">
    <location>
        <begin position="38"/>
        <end position="63"/>
    </location>
</feature>
<feature type="compositionally biased region" description="Polar residues" evidence="2">
    <location>
        <begin position="70"/>
        <end position="97"/>
    </location>
</feature>
<comment type="function">
    <text evidence="1">Cell division protein that is part of the divisome complex and is recruited early to the Z-ring. Probably stimulates Z-ring formation, perhaps through the cross-linking of FtsZ protofilaments. Its function overlaps with FtsA.</text>
</comment>
<comment type="subunit">
    <text evidence="1">Homodimer. Interacts with FtsZ.</text>
</comment>
<comment type="subcellular location">
    <subcellularLocation>
        <location evidence="1">Cytoplasm</location>
    </subcellularLocation>
    <text evidence="1">Localizes to the division site, in a FtsZ-dependent manner.</text>
</comment>
<comment type="similarity">
    <text evidence="1">Belongs to the SepF family.</text>
</comment>
<protein>
    <recommendedName>
        <fullName evidence="1">Cell division protein SepF</fullName>
    </recommendedName>
</protein>